<protein>
    <recommendedName>
        <fullName evidence="1">UPF0250 protein CGSHiGG_02625</fullName>
    </recommendedName>
</protein>
<evidence type="ECO:0000255" key="1">
    <source>
        <dbReference type="HAMAP-Rule" id="MF_00659"/>
    </source>
</evidence>
<gene>
    <name type="ordered locus">CGSHiGG_02625</name>
</gene>
<dbReference type="EMBL" id="CP000672">
    <property type="protein sequence ID" value="ABQ99555.1"/>
    <property type="molecule type" value="Genomic_DNA"/>
</dbReference>
<dbReference type="SMR" id="A5UFK0"/>
<dbReference type="KEGG" id="hiq:CGSHiGG_02625"/>
<dbReference type="HOGENOM" id="CLU_161438_2_1_6"/>
<dbReference type="Proteomes" id="UP000001990">
    <property type="component" value="Chromosome"/>
</dbReference>
<dbReference type="GO" id="GO:0005829">
    <property type="term" value="C:cytosol"/>
    <property type="evidence" value="ECO:0007669"/>
    <property type="project" value="TreeGrafter"/>
</dbReference>
<dbReference type="Gene3D" id="3.30.70.260">
    <property type="match status" value="1"/>
</dbReference>
<dbReference type="HAMAP" id="MF_00659">
    <property type="entry name" value="UPF0250"/>
    <property type="match status" value="1"/>
</dbReference>
<dbReference type="InterPro" id="IPR007454">
    <property type="entry name" value="UPF0250_YbeD-like"/>
</dbReference>
<dbReference type="InterPro" id="IPR027471">
    <property type="entry name" value="YbeD-like_sf"/>
</dbReference>
<dbReference type="NCBIfam" id="NF003447">
    <property type="entry name" value="PRK04998.1"/>
    <property type="match status" value="1"/>
</dbReference>
<dbReference type="PANTHER" id="PTHR38036">
    <property type="entry name" value="UPF0250 PROTEIN YBED"/>
    <property type="match status" value="1"/>
</dbReference>
<dbReference type="PANTHER" id="PTHR38036:SF1">
    <property type="entry name" value="UPF0250 PROTEIN YBED"/>
    <property type="match status" value="1"/>
</dbReference>
<dbReference type="Pfam" id="PF04359">
    <property type="entry name" value="DUF493"/>
    <property type="match status" value="1"/>
</dbReference>
<dbReference type="SUPFAM" id="SSF117991">
    <property type="entry name" value="YbeD/HP0495-like"/>
    <property type="match status" value="1"/>
</dbReference>
<proteinExistence type="inferred from homology"/>
<sequence>MTIENDYAKLKELMEFPAKMTFKVAGINREGLAQDLIQVVQKYIKGDYIPKEKRSSKGTYNSVSIDIIAENFDQVETLYKELAKVEGVKMVI</sequence>
<comment type="similarity">
    <text evidence="1">Belongs to the UPF0250 family.</text>
</comment>
<feature type="chain" id="PRO_1000061871" description="UPF0250 protein CGSHiGG_02625">
    <location>
        <begin position="1"/>
        <end position="92"/>
    </location>
</feature>
<organism>
    <name type="scientific">Haemophilus influenzae (strain PittGG)</name>
    <dbReference type="NCBI Taxonomy" id="374931"/>
    <lineage>
        <taxon>Bacteria</taxon>
        <taxon>Pseudomonadati</taxon>
        <taxon>Pseudomonadota</taxon>
        <taxon>Gammaproteobacteria</taxon>
        <taxon>Pasteurellales</taxon>
        <taxon>Pasteurellaceae</taxon>
        <taxon>Haemophilus</taxon>
    </lineage>
</organism>
<accession>A5UFK0</accession>
<name>Y2625_HAEIG</name>
<reference key="1">
    <citation type="journal article" date="2007" name="Genome Biol.">
        <title>Characterization and modeling of the Haemophilus influenzae core and supragenomes based on the complete genomic sequences of Rd and 12 clinical nontypeable strains.</title>
        <authorList>
            <person name="Hogg J.S."/>
            <person name="Hu F.Z."/>
            <person name="Janto B."/>
            <person name="Boissy R."/>
            <person name="Hayes J."/>
            <person name="Keefe R."/>
            <person name="Post J.C."/>
            <person name="Ehrlich G.D."/>
        </authorList>
    </citation>
    <scope>NUCLEOTIDE SEQUENCE [LARGE SCALE GENOMIC DNA]</scope>
    <source>
        <strain>PittGG</strain>
    </source>
</reference>